<accession>B2FNJ0</accession>
<reference key="1">
    <citation type="journal article" date="2008" name="Genome Biol.">
        <title>The complete genome, comparative and functional analysis of Stenotrophomonas maltophilia reveals an organism heavily shielded by drug resistance determinants.</title>
        <authorList>
            <person name="Crossman L.C."/>
            <person name="Gould V.C."/>
            <person name="Dow J.M."/>
            <person name="Vernikos G.S."/>
            <person name="Okazaki A."/>
            <person name="Sebaihia M."/>
            <person name="Saunders D."/>
            <person name="Arrowsmith C."/>
            <person name="Carver T."/>
            <person name="Peters N."/>
            <person name="Adlem E."/>
            <person name="Kerhornou A."/>
            <person name="Lord A."/>
            <person name="Murphy L."/>
            <person name="Seeger K."/>
            <person name="Squares R."/>
            <person name="Rutter S."/>
            <person name="Quail M.A."/>
            <person name="Rajandream M.A."/>
            <person name="Harris D."/>
            <person name="Churcher C."/>
            <person name="Bentley S.D."/>
            <person name="Parkhill J."/>
            <person name="Thomson N.R."/>
            <person name="Avison M.B."/>
        </authorList>
    </citation>
    <scope>NUCLEOTIDE SEQUENCE [LARGE SCALE GENOMIC DNA]</scope>
    <source>
        <strain>K279a</strain>
    </source>
</reference>
<reference key="2">
    <citation type="journal article" date="2003" name="Cell. Microbiol.">
        <title>Fimbriae and adherence of Stenotrophomonas maltophilia to epithelial cells and to abiotic surfaces.</title>
        <authorList>
            <person name="de Oliveira-Garcia D."/>
            <person name="Dall'Agnol M."/>
            <person name="Rosales M."/>
            <person name="Azzuz A.C."/>
            <person name="Alcantara N."/>
            <person name="Martinez M.B."/>
            <person name="Giron J.A."/>
        </authorList>
    </citation>
    <scope>PROTEIN SEQUENCE OF 12-29</scope>
    <scope>FUNCTION</scope>
    <scope>SUBCELLULAR LOCATION</scope>
    <scope>INDUCTION</scope>
    <source>
        <strain>ATCC 13637</strain>
        <strain>SMDP92</strain>
    </source>
</reference>
<reference key="3">
    <citation type="journal article" date="2011" name="Int. J. Med. Microbiol.">
        <title>Stenotrophomonas maltophilia strains from cystic fibrosis patients: genomic variability and molecular characterization of some virulence determinants.</title>
        <authorList>
            <person name="Nicoletti M."/>
            <person name="Iacobino A."/>
            <person name="Prosseda G."/>
            <person name="Fiscarelli E."/>
            <person name="Zarrilli R."/>
            <person name="De Carolis E."/>
            <person name="Petrucca A."/>
            <person name="Nencioni L."/>
            <person name="Colonna B."/>
            <person name="Casalino M."/>
        </authorList>
    </citation>
    <scope>DISTRIBUTION IN STRAINS</scope>
</reference>
<sequence>MLAAAPLAANAADGTITFNGKVTDKTCTISTPGGKDFAVNLPTVSKNTLATAGAVAGRTPFAINLTKCSAGNVATYFEPGSTVDFNTGRLLNQASANAATNVQLQLLGSNNQVLPIKAAGAGLAQTNSQWVTVGTDGSADLNYYAEYYATAAATPGDVTSSVKYTIIYN</sequence>
<keyword id="KW-0130">Cell adhesion</keyword>
<keyword id="KW-0903">Direct protein sequencing</keyword>
<keyword id="KW-0281">Fimbrium</keyword>
<keyword id="KW-1185">Reference proteome</keyword>
<keyword id="KW-0732">Signal</keyword>
<keyword id="KW-0843">Virulence</keyword>
<evidence type="ECO:0000269" key="1">
    <source>
    </source>
</evidence>
<evidence type="ECO:0000303" key="2">
    <source>
    </source>
</evidence>
<evidence type="ECO:0000305" key="3"/>
<evidence type="ECO:0000305" key="4">
    <source>
    </source>
</evidence>
<evidence type="ECO:0000312" key="5">
    <source>
        <dbReference type="EMBL" id="CAQ44285.1"/>
    </source>
</evidence>
<gene>
    <name evidence="5" type="primary">smf-1</name>
    <name evidence="5" type="ordered locus">Smlt0706</name>
</gene>
<organism>
    <name type="scientific">Stenotrophomonas maltophilia (strain K279a)</name>
    <dbReference type="NCBI Taxonomy" id="522373"/>
    <lineage>
        <taxon>Bacteria</taxon>
        <taxon>Pseudomonadati</taxon>
        <taxon>Pseudomonadota</taxon>
        <taxon>Gammaproteobacteria</taxon>
        <taxon>Lysobacterales</taxon>
        <taxon>Lysobacteraceae</taxon>
        <taxon>Stenotrophomonas</taxon>
        <taxon>Stenotrophomonas maltophilia group</taxon>
    </lineage>
</organism>
<comment type="function">
    <text evidence="1">Involved in adherence to eukaryotic epithelial cells and abiotic surfaces. Mediates agglutination of animal red blood cells.</text>
</comment>
<comment type="subcellular location">
    <subcellularLocation>
        <location evidence="1">Fimbrium</location>
    </subcellularLocation>
</comment>
<comment type="induction">
    <text evidence="1">Expression is temperature-dependent. Expression is maximal between 30-37 degrees Celsius. Not expressed at 18 degrees Celsius.</text>
</comment>
<comment type="miscellaneous">
    <text evidence="4">The smf-1 gene is present in clinically derived strains, including strains isolated from hospital environment, but not in strains of environmental origin.</text>
</comment>
<comment type="similarity">
    <text evidence="3">Belongs to the fimbrial protein family.</text>
</comment>
<dbReference type="EMBL" id="AM743169">
    <property type="protein sequence ID" value="CAQ44285.1"/>
    <property type="molecule type" value="Genomic_DNA"/>
</dbReference>
<dbReference type="SMR" id="B2FNJ0"/>
<dbReference type="EnsemblBacteria" id="CAQ44285">
    <property type="protein sequence ID" value="CAQ44285"/>
    <property type="gene ID" value="Smlt0706"/>
</dbReference>
<dbReference type="KEGG" id="sml:Smlt0706"/>
<dbReference type="eggNOG" id="COG3539">
    <property type="taxonomic scope" value="Bacteria"/>
</dbReference>
<dbReference type="HOGENOM" id="CLU_088965_2_4_6"/>
<dbReference type="Proteomes" id="UP000008840">
    <property type="component" value="Chromosome"/>
</dbReference>
<dbReference type="GO" id="GO:0009289">
    <property type="term" value="C:pilus"/>
    <property type="evidence" value="ECO:0007669"/>
    <property type="project" value="UniProtKB-SubCell"/>
</dbReference>
<dbReference type="GO" id="GO:0043709">
    <property type="term" value="P:cell adhesion involved in single-species biofilm formation"/>
    <property type="evidence" value="ECO:0007669"/>
    <property type="project" value="TreeGrafter"/>
</dbReference>
<dbReference type="Gene3D" id="2.60.40.1090">
    <property type="entry name" value="Fimbrial-type adhesion domain"/>
    <property type="match status" value="1"/>
</dbReference>
<dbReference type="InterPro" id="IPR036937">
    <property type="entry name" value="Adhesion_dom_fimbrial_sf"/>
</dbReference>
<dbReference type="InterPro" id="IPR008966">
    <property type="entry name" value="Adhesion_dom_sf"/>
</dbReference>
<dbReference type="InterPro" id="IPR050263">
    <property type="entry name" value="Bact_Fimbrial_Adh_Pro"/>
</dbReference>
<dbReference type="InterPro" id="IPR039458">
    <property type="entry name" value="FimA-like"/>
</dbReference>
<dbReference type="PANTHER" id="PTHR33420:SF3">
    <property type="entry name" value="FIMBRIAL SUBUNIT ELFA"/>
    <property type="match status" value="1"/>
</dbReference>
<dbReference type="PANTHER" id="PTHR33420">
    <property type="entry name" value="FIMBRIAL SUBUNIT ELFA-RELATED"/>
    <property type="match status" value="1"/>
</dbReference>
<dbReference type="Pfam" id="PF16970">
    <property type="entry name" value="FimA"/>
    <property type="match status" value="1"/>
</dbReference>
<dbReference type="SUPFAM" id="SSF49401">
    <property type="entry name" value="Bacterial adhesins"/>
    <property type="match status" value="1"/>
</dbReference>
<protein>
    <recommendedName>
        <fullName evidence="3">Major fimbrial subunit SMF-1</fullName>
    </recommendedName>
    <alternativeName>
        <fullName evidence="2">S. maltophilia fimbriae 1</fullName>
        <shortName evidence="2">SMF-1</shortName>
    </alternativeName>
</protein>
<proteinExistence type="evidence at protein level"/>
<name>SMF1_STRMK</name>
<feature type="signal peptide" evidence="1">
    <location>
        <begin position="1"/>
        <end position="11"/>
    </location>
</feature>
<feature type="chain" id="PRO_0000432908" description="Major fimbrial subunit SMF-1">
    <location>
        <begin position="12"/>
        <end position="169"/>
    </location>
</feature>
<feature type="sequence conflict" description="In Ref. 2; AA sequence." evidence="3" ref="2">
    <original>CT</original>
    <variation>AA</variation>
    <location>
        <begin position="27"/>
        <end position="28"/>
    </location>
</feature>